<feature type="chain" id="PRO_0000147335" description="GTP cyclohydrolase 1 type 2 homolog">
    <location>
        <begin position="1"/>
        <end position="285"/>
    </location>
</feature>
<feature type="binding site" evidence="1">
    <location>
        <position position="65"/>
    </location>
    <ligand>
        <name>a divalent metal cation</name>
        <dbReference type="ChEBI" id="CHEBI:60240"/>
        <label>1</label>
    </ligand>
</feature>
<feature type="binding site" evidence="1">
    <location>
        <position position="66"/>
    </location>
    <ligand>
        <name>a divalent metal cation</name>
        <dbReference type="ChEBI" id="CHEBI:60240"/>
        <label>2</label>
    </ligand>
</feature>
<feature type="binding site" evidence="1">
    <location>
        <position position="104"/>
    </location>
    <ligand>
        <name>a divalent metal cation</name>
        <dbReference type="ChEBI" id="CHEBI:60240"/>
        <label>1</label>
    </ligand>
</feature>
<feature type="binding site" evidence="1">
    <location>
        <position position="230"/>
    </location>
    <ligand>
        <name>a divalent metal cation</name>
        <dbReference type="ChEBI" id="CHEBI:60240"/>
        <label>2</label>
    </ligand>
</feature>
<feature type="binding site" evidence="1">
    <location>
        <position position="234"/>
    </location>
    <ligand>
        <name>a divalent metal cation</name>
        <dbReference type="ChEBI" id="CHEBI:60240"/>
        <label>1</label>
    </ligand>
</feature>
<feature type="binding site" evidence="1">
    <location>
        <position position="234"/>
    </location>
    <ligand>
        <name>a divalent metal cation</name>
        <dbReference type="ChEBI" id="CHEBI:60240"/>
        <label>2</label>
    </ligand>
</feature>
<sequence>MPRLSEVITALDALWPAERAESWDAVGTVVGEPDQEVSRVLFAVDPVQETVDEAVGLGADLLVTHHPLYLRGTTTVAASTFKGRVVHTLIKNDIALHVAHTNADTADPGVSDALAGALDLNVVRPLVPDPSDPEGRRGLGRVCELTHPLTVRELAARAAERLPATAQGIRVAGDPEATVRTVAVSGGSGDSLFDHVRAAGVDAFLTADLRHHPVSEARAHNPLALLDAAHWATEWPWCELGAAQLDEISDRHGWDLRVHVSKTVTDPWTAHVASAPTSSAMGAPN</sequence>
<gene>
    <name type="ordered locus">SCO2301</name>
    <name type="ORF">SCC30.09c</name>
</gene>
<evidence type="ECO:0000250" key="1">
    <source>
        <dbReference type="UniProtKB" id="P0AFP6"/>
    </source>
</evidence>
<evidence type="ECO:0000305" key="2"/>
<dbReference type="EMBL" id="AL939112">
    <property type="protein sequence ID" value="CAB88179.1"/>
    <property type="molecule type" value="Genomic_DNA"/>
</dbReference>
<dbReference type="RefSeq" id="NP_626549.1">
    <property type="nucleotide sequence ID" value="NC_003888.3"/>
</dbReference>
<dbReference type="RefSeq" id="WP_011028263.1">
    <property type="nucleotide sequence ID" value="NZ_VNID01000001.1"/>
</dbReference>
<dbReference type="SMR" id="Q9L012"/>
<dbReference type="STRING" id="100226.gene:17759899"/>
<dbReference type="PaxDb" id="100226-SCO2301"/>
<dbReference type="KEGG" id="sco:SCO2301"/>
<dbReference type="PATRIC" id="fig|100226.15.peg.2338"/>
<dbReference type="eggNOG" id="COG0327">
    <property type="taxonomic scope" value="Bacteria"/>
</dbReference>
<dbReference type="HOGENOM" id="CLU_037423_1_2_11"/>
<dbReference type="InParanoid" id="Q9L012"/>
<dbReference type="OrthoDB" id="9795763at2"/>
<dbReference type="PhylomeDB" id="Q9L012"/>
<dbReference type="Proteomes" id="UP000001973">
    <property type="component" value="Chromosome"/>
</dbReference>
<dbReference type="GO" id="GO:0005737">
    <property type="term" value="C:cytoplasm"/>
    <property type="evidence" value="ECO:0000318"/>
    <property type="project" value="GO_Central"/>
</dbReference>
<dbReference type="GO" id="GO:0046872">
    <property type="term" value="F:metal ion binding"/>
    <property type="evidence" value="ECO:0007669"/>
    <property type="project" value="UniProtKB-KW"/>
</dbReference>
<dbReference type="FunFam" id="3.40.1390.30:FF:000005">
    <property type="entry name" value="Nif3-like dinuclear metal center hexameric protein"/>
    <property type="match status" value="1"/>
</dbReference>
<dbReference type="Gene3D" id="3.40.1390.30">
    <property type="entry name" value="NIF3 (NGG1p interacting factor 3)-like"/>
    <property type="match status" value="2"/>
</dbReference>
<dbReference type="InterPro" id="IPR002678">
    <property type="entry name" value="DUF34/NIF3"/>
</dbReference>
<dbReference type="InterPro" id="IPR036069">
    <property type="entry name" value="DUF34/NIF3_sf"/>
</dbReference>
<dbReference type="NCBIfam" id="TIGR00486">
    <property type="entry name" value="YbgI_SA1388"/>
    <property type="match status" value="1"/>
</dbReference>
<dbReference type="PANTHER" id="PTHR13799:SF14">
    <property type="entry name" value="GTP CYCLOHYDROLASE 1 TYPE 2 HOMOLOG"/>
    <property type="match status" value="1"/>
</dbReference>
<dbReference type="PANTHER" id="PTHR13799">
    <property type="entry name" value="NGG1 INTERACTING FACTOR 3"/>
    <property type="match status" value="1"/>
</dbReference>
<dbReference type="Pfam" id="PF01784">
    <property type="entry name" value="DUF34_NIF3"/>
    <property type="match status" value="1"/>
</dbReference>
<dbReference type="SUPFAM" id="SSF102705">
    <property type="entry name" value="NIF3 (NGG1p interacting factor 3)-like"/>
    <property type="match status" value="1"/>
</dbReference>
<organism>
    <name type="scientific">Streptomyces coelicolor (strain ATCC BAA-471 / A3(2) / M145)</name>
    <dbReference type="NCBI Taxonomy" id="100226"/>
    <lineage>
        <taxon>Bacteria</taxon>
        <taxon>Bacillati</taxon>
        <taxon>Actinomycetota</taxon>
        <taxon>Actinomycetes</taxon>
        <taxon>Kitasatosporales</taxon>
        <taxon>Streptomycetaceae</taxon>
        <taxon>Streptomyces</taxon>
        <taxon>Streptomyces albidoflavus group</taxon>
    </lineage>
</organism>
<accession>Q9L012</accession>
<proteinExistence type="inferred from homology"/>
<protein>
    <recommendedName>
        <fullName>GTP cyclohydrolase 1 type 2 homolog</fullName>
    </recommendedName>
</protein>
<name>GCH1L_STRCO</name>
<keyword id="KW-0479">Metal-binding</keyword>
<keyword id="KW-1185">Reference proteome</keyword>
<comment type="subunit">
    <text evidence="1">Homohexamer.</text>
</comment>
<comment type="similarity">
    <text evidence="2">Belongs to the GTP cyclohydrolase I type 2/NIF3 family.</text>
</comment>
<reference key="1">
    <citation type="journal article" date="2002" name="Nature">
        <title>Complete genome sequence of the model actinomycete Streptomyces coelicolor A3(2).</title>
        <authorList>
            <person name="Bentley S.D."/>
            <person name="Chater K.F."/>
            <person name="Cerdeno-Tarraga A.-M."/>
            <person name="Challis G.L."/>
            <person name="Thomson N.R."/>
            <person name="James K.D."/>
            <person name="Harris D.E."/>
            <person name="Quail M.A."/>
            <person name="Kieser H."/>
            <person name="Harper D."/>
            <person name="Bateman A."/>
            <person name="Brown S."/>
            <person name="Chandra G."/>
            <person name="Chen C.W."/>
            <person name="Collins M."/>
            <person name="Cronin A."/>
            <person name="Fraser A."/>
            <person name="Goble A."/>
            <person name="Hidalgo J."/>
            <person name="Hornsby T."/>
            <person name="Howarth S."/>
            <person name="Huang C.-H."/>
            <person name="Kieser T."/>
            <person name="Larke L."/>
            <person name="Murphy L.D."/>
            <person name="Oliver K."/>
            <person name="O'Neil S."/>
            <person name="Rabbinowitsch E."/>
            <person name="Rajandream M.A."/>
            <person name="Rutherford K.M."/>
            <person name="Rutter S."/>
            <person name="Seeger K."/>
            <person name="Saunders D."/>
            <person name="Sharp S."/>
            <person name="Squares R."/>
            <person name="Squares S."/>
            <person name="Taylor K."/>
            <person name="Warren T."/>
            <person name="Wietzorrek A."/>
            <person name="Woodward J.R."/>
            <person name="Barrell B.G."/>
            <person name="Parkhill J."/>
            <person name="Hopwood D.A."/>
        </authorList>
    </citation>
    <scope>NUCLEOTIDE SEQUENCE [LARGE SCALE GENOMIC DNA]</scope>
    <source>
        <strain>ATCC BAA-471 / A3(2) / M145</strain>
    </source>
</reference>